<feature type="chain" id="PRO_1000047606" description="Glutamate racemase">
    <location>
        <begin position="1"/>
        <end position="259"/>
    </location>
</feature>
<feature type="active site" description="Proton donor/acceptor" evidence="1">
    <location>
        <position position="73"/>
    </location>
</feature>
<feature type="active site" description="Proton donor/acceptor" evidence="1">
    <location>
        <position position="183"/>
    </location>
</feature>
<feature type="binding site" evidence="1">
    <location>
        <begin position="9"/>
        <end position="10"/>
    </location>
    <ligand>
        <name>substrate</name>
    </ligand>
</feature>
<feature type="binding site" evidence="1">
    <location>
        <begin position="41"/>
        <end position="42"/>
    </location>
    <ligand>
        <name>substrate</name>
    </ligand>
</feature>
<feature type="binding site" evidence="1">
    <location>
        <begin position="74"/>
        <end position="75"/>
    </location>
    <ligand>
        <name>substrate</name>
    </ligand>
</feature>
<feature type="binding site" evidence="1">
    <location>
        <begin position="184"/>
        <end position="185"/>
    </location>
    <ligand>
        <name>substrate</name>
    </ligand>
</feature>
<reference key="1">
    <citation type="submission" date="2006-08" db="EMBL/GenBank/DDBJ databases">
        <title>Complete sequence of Shewanella frigidimarina NCIMB 400.</title>
        <authorList>
            <consortium name="US DOE Joint Genome Institute"/>
            <person name="Copeland A."/>
            <person name="Lucas S."/>
            <person name="Lapidus A."/>
            <person name="Barry K."/>
            <person name="Detter J.C."/>
            <person name="Glavina del Rio T."/>
            <person name="Hammon N."/>
            <person name="Israni S."/>
            <person name="Dalin E."/>
            <person name="Tice H."/>
            <person name="Pitluck S."/>
            <person name="Fredrickson J.K."/>
            <person name="Kolker E."/>
            <person name="McCuel L.A."/>
            <person name="DiChristina T."/>
            <person name="Nealson K.H."/>
            <person name="Newman D."/>
            <person name="Tiedje J.M."/>
            <person name="Zhou J."/>
            <person name="Romine M.F."/>
            <person name="Culley D.E."/>
            <person name="Serres M."/>
            <person name="Chertkov O."/>
            <person name="Brettin T."/>
            <person name="Bruce D."/>
            <person name="Han C."/>
            <person name="Tapia R."/>
            <person name="Gilna P."/>
            <person name="Schmutz J."/>
            <person name="Larimer F."/>
            <person name="Land M."/>
            <person name="Hauser L."/>
            <person name="Kyrpides N."/>
            <person name="Mikhailova N."/>
            <person name="Richardson P."/>
        </authorList>
    </citation>
    <scope>NUCLEOTIDE SEQUENCE [LARGE SCALE GENOMIC DNA]</scope>
    <source>
        <strain>NCIMB 400</strain>
    </source>
</reference>
<organism>
    <name type="scientific">Shewanella frigidimarina (strain NCIMB 400)</name>
    <dbReference type="NCBI Taxonomy" id="318167"/>
    <lineage>
        <taxon>Bacteria</taxon>
        <taxon>Pseudomonadati</taxon>
        <taxon>Pseudomonadota</taxon>
        <taxon>Gammaproteobacteria</taxon>
        <taxon>Alteromonadales</taxon>
        <taxon>Shewanellaceae</taxon>
        <taxon>Shewanella</taxon>
    </lineage>
</organism>
<dbReference type="EC" id="5.1.1.3" evidence="1"/>
<dbReference type="EMBL" id="CP000447">
    <property type="protein sequence ID" value="ABI69989.1"/>
    <property type="molecule type" value="Genomic_DNA"/>
</dbReference>
<dbReference type="RefSeq" id="WP_011635618.1">
    <property type="nucleotide sequence ID" value="NC_008345.1"/>
</dbReference>
<dbReference type="SMR" id="Q089S6"/>
<dbReference type="STRING" id="318167.Sfri_0126"/>
<dbReference type="KEGG" id="sfr:Sfri_0126"/>
<dbReference type="eggNOG" id="COG0796">
    <property type="taxonomic scope" value="Bacteria"/>
</dbReference>
<dbReference type="HOGENOM" id="CLU_052344_2_0_6"/>
<dbReference type="OrthoDB" id="9801055at2"/>
<dbReference type="UniPathway" id="UPA00219"/>
<dbReference type="Proteomes" id="UP000000684">
    <property type="component" value="Chromosome"/>
</dbReference>
<dbReference type="GO" id="GO:0008881">
    <property type="term" value="F:glutamate racemase activity"/>
    <property type="evidence" value="ECO:0007669"/>
    <property type="project" value="UniProtKB-UniRule"/>
</dbReference>
<dbReference type="GO" id="GO:0071555">
    <property type="term" value="P:cell wall organization"/>
    <property type="evidence" value="ECO:0007669"/>
    <property type="project" value="UniProtKB-KW"/>
</dbReference>
<dbReference type="GO" id="GO:0009252">
    <property type="term" value="P:peptidoglycan biosynthetic process"/>
    <property type="evidence" value="ECO:0007669"/>
    <property type="project" value="UniProtKB-UniRule"/>
</dbReference>
<dbReference type="GO" id="GO:0008360">
    <property type="term" value="P:regulation of cell shape"/>
    <property type="evidence" value="ECO:0007669"/>
    <property type="project" value="UniProtKB-KW"/>
</dbReference>
<dbReference type="FunFam" id="3.40.50.1860:FF:000001">
    <property type="entry name" value="Glutamate racemase"/>
    <property type="match status" value="1"/>
</dbReference>
<dbReference type="Gene3D" id="3.40.50.1860">
    <property type="match status" value="2"/>
</dbReference>
<dbReference type="HAMAP" id="MF_00258">
    <property type="entry name" value="Glu_racemase"/>
    <property type="match status" value="1"/>
</dbReference>
<dbReference type="InterPro" id="IPR015942">
    <property type="entry name" value="Asp/Glu/hydantoin_racemase"/>
</dbReference>
<dbReference type="InterPro" id="IPR001920">
    <property type="entry name" value="Asp/Glu_race"/>
</dbReference>
<dbReference type="InterPro" id="IPR018187">
    <property type="entry name" value="Asp/Glu_racemase_AS_1"/>
</dbReference>
<dbReference type="InterPro" id="IPR033134">
    <property type="entry name" value="Asp/Glu_racemase_AS_2"/>
</dbReference>
<dbReference type="InterPro" id="IPR004391">
    <property type="entry name" value="Glu_race"/>
</dbReference>
<dbReference type="NCBIfam" id="TIGR00067">
    <property type="entry name" value="glut_race"/>
    <property type="match status" value="1"/>
</dbReference>
<dbReference type="PANTHER" id="PTHR21198">
    <property type="entry name" value="GLUTAMATE RACEMASE"/>
    <property type="match status" value="1"/>
</dbReference>
<dbReference type="PANTHER" id="PTHR21198:SF2">
    <property type="entry name" value="GLUTAMATE RACEMASE"/>
    <property type="match status" value="1"/>
</dbReference>
<dbReference type="Pfam" id="PF01177">
    <property type="entry name" value="Asp_Glu_race"/>
    <property type="match status" value="1"/>
</dbReference>
<dbReference type="SUPFAM" id="SSF53681">
    <property type="entry name" value="Aspartate/glutamate racemase"/>
    <property type="match status" value="2"/>
</dbReference>
<dbReference type="PROSITE" id="PS00923">
    <property type="entry name" value="ASP_GLU_RACEMASE_1"/>
    <property type="match status" value="1"/>
</dbReference>
<dbReference type="PROSITE" id="PS00924">
    <property type="entry name" value="ASP_GLU_RACEMASE_2"/>
    <property type="match status" value="1"/>
</dbReference>
<accession>Q089S6</accession>
<name>MURI_SHEFN</name>
<sequence>MSGPILVFDSGIGGLSVMNEIRKQLPLHDYCYLFDNARLPYGNLSEQELITGCVALITHHARRLNASIVVVACNTASTLVLPLLRQQLTIPIVGVVPAIKPAAMLSKKKHIGLLATPGTVKRDYTQALINQFAGNCKVELFGTSDLVLLAEQYVAQQQIDMDKLNEILAPIAASNIDVLVLGCTHFPMIATEISHYLGEGVTLLDSGEAVAKRVRFLLSKESNSNKQLQACYTKDIGQGLKAALVDYGFSDFSLVTITD</sequence>
<gene>
    <name evidence="1" type="primary">murI</name>
    <name type="ordered locus">Sfri_0126</name>
</gene>
<comment type="function">
    <text evidence="1">Provides the (R)-glutamate required for cell wall biosynthesis.</text>
</comment>
<comment type="catalytic activity">
    <reaction evidence="1">
        <text>L-glutamate = D-glutamate</text>
        <dbReference type="Rhea" id="RHEA:12813"/>
        <dbReference type="ChEBI" id="CHEBI:29985"/>
        <dbReference type="ChEBI" id="CHEBI:29986"/>
        <dbReference type="EC" id="5.1.1.3"/>
    </reaction>
</comment>
<comment type="pathway">
    <text evidence="1">Cell wall biogenesis; peptidoglycan biosynthesis.</text>
</comment>
<comment type="similarity">
    <text evidence="1">Belongs to the aspartate/glutamate racemases family.</text>
</comment>
<proteinExistence type="inferred from homology"/>
<keyword id="KW-0133">Cell shape</keyword>
<keyword id="KW-0961">Cell wall biogenesis/degradation</keyword>
<keyword id="KW-0413">Isomerase</keyword>
<keyword id="KW-0573">Peptidoglycan synthesis</keyword>
<keyword id="KW-1185">Reference proteome</keyword>
<protein>
    <recommendedName>
        <fullName evidence="1">Glutamate racemase</fullName>
        <ecNumber evidence="1">5.1.1.3</ecNumber>
    </recommendedName>
</protein>
<evidence type="ECO:0000255" key="1">
    <source>
        <dbReference type="HAMAP-Rule" id="MF_00258"/>
    </source>
</evidence>